<dbReference type="EMBL" id="AB065900">
    <property type="protein sequence ID" value="BAC06116.1"/>
    <property type="molecule type" value="Genomic_DNA"/>
</dbReference>
<dbReference type="EMBL" id="CH471101">
    <property type="protein sequence ID" value="EAX02320.1"/>
    <property type="molecule type" value="Genomic_DNA"/>
</dbReference>
<dbReference type="EMBL" id="BC137064">
    <property type="protein sequence ID" value="AAI37065.1"/>
    <property type="molecule type" value="mRNA"/>
</dbReference>
<dbReference type="EMBL" id="BC137065">
    <property type="protein sequence ID" value="AAI37066.1"/>
    <property type="molecule type" value="mRNA"/>
</dbReference>
<dbReference type="EMBL" id="AF399573">
    <property type="protein sequence ID" value="AAK95058.1"/>
    <property type="molecule type" value="Genomic_DNA"/>
</dbReference>
<dbReference type="EMBL" id="BK004405">
    <property type="protein sequence ID" value="DAA04803.1"/>
    <property type="molecule type" value="Genomic_DNA"/>
</dbReference>
<dbReference type="CCDS" id="CCDS32342.1"/>
<dbReference type="RefSeq" id="NP_001001674.1">
    <property type="nucleotide sequence ID" value="NM_001001674.2"/>
</dbReference>
<dbReference type="SMR" id="Q8NGB8"/>
<dbReference type="FunCoup" id="Q8NGB8">
    <property type="interactions" value="416"/>
</dbReference>
<dbReference type="STRING" id="9606.ENSP00000333184"/>
<dbReference type="GlyCosmos" id="Q8NGB8">
    <property type="glycosylation" value="1 site, No reported glycans"/>
</dbReference>
<dbReference type="GlyGen" id="Q8NGB8">
    <property type="glycosylation" value="3 sites, 1 O-linked glycan (2 sites)"/>
</dbReference>
<dbReference type="BioMuta" id="OR4F15"/>
<dbReference type="DMDM" id="38372659"/>
<dbReference type="PaxDb" id="9606-ENSP00000333184"/>
<dbReference type="PeptideAtlas" id="Q8NGB8"/>
<dbReference type="Antibodypedia" id="64418">
    <property type="antibodies" value="68 antibodies from 19 providers"/>
</dbReference>
<dbReference type="DNASU" id="390649"/>
<dbReference type="Ensembl" id="ENST00000332238.5">
    <property type="protein sequence ID" value="ENSP00000333184.4"/>
    <property type="gene ID" value="ENSG00000182854.8"/>
</dbReference>
<dbReference type="GeneID" id="390649"/>
<dbReference type="KEGG" id="hsa:390649"/>
<dbReference type="MANE-Select" id="ENST00000332238.5">
    <property type="protein sequence ID" value="ENSP00000333184.4"/>
    <property type="RefSeq nucleotide sequence ID" value="NM_001001674.2"/>
    <property type="RefSeq protein sequence ID" value="NP_001001674.1"/>
</dbReference>
<dbReference type="UCSC" id="uc010uts.3">
    <property type="organism name" value="human"/>
</dbReference>
<dbReference type="AGR" id="HGNC:15078"/>
<dbReference type="CTD" id="390649"/>
<dbReference type="DisGeNET" id="390649"/>
<dbReference type="GeneCards" id="OR4F15"/>
<dbReference type="HGNC" id="HGNC:15078">
    <property type="gene designation" value="OR4F15"/>
</dbReference>
<dbReference type="HPA" id="ENSG00000182854">
    <property type="expression patterns" value="Not detected"/>
</dbReference>
<dbReference type="neXtProt" id="NX_Q8NGB8"/>
<dbReference type="OpenTargets" id="ENSG00000182854"/>
<dbReference type="PharmGKB" id="PA32283"/>
<dbReference type="VEuPathDB" id="HostDB:ENSG00000182854"/>
<dbReference type="eggNOG" id="ENOG502RQA5">
    <property type="taxonomic scope" value="Eukaryota"/>
</dbReference>
<dbReference type="GeneTree" id="ENSGT00940000163067"/>
<dbReference type="InParanoid" id="Q8NGB8"/>
<dbReference type="OMA" id="MAFCSIT"/>
<dbReference type="OrthoDB" id="6147321at2759"/>
<dbReference type="PAN-GO" id="Q8NGB8">
    <property type="GO annotations" value="2 GO annotations based on evolutionary models"/>
</dbReference>
<dbReference type="PhylomeDB" id="Q8NGB8"/>
<dbReference type="TreeFam" id="TF336512"/>
<dbReference type="PathwayCommons" id="Q8NGB8"/>
<dbReference type="Reactome" id="R-HSA-9752946">
    <property type="pathway name" value="Expression and translocation of olfactory receptors"/>
</dbReference>
<dbReference type="BioGRID-ORCS" id="390649">
    <property type="hits" value="4 hits in 739 CRISPR screens"/>
</dbReference>
<dbReference type="GeneWiki" id="OR4F15"/>
<dbReference type="GenomeRNAi" id="390649"/>
<dbReference type="Pharos" id="Q8NGB8">
    <property type="development level" value="Tdark"/>
</dbReference>
<dbReference type="PRO" id="PR:Q8NGB8"/>
<dbReference type="Proteomes" id="UP000005640">
    <property type="component" value="Chromosome 15"/>
</dbReference>
<dbReference type="RNAct" id="Q8NGB8">
    <property type="molecule type" value="protein"/>
</dbReference>
<dbReference type="ExpressionAtlas" id="Q8NGB8">
    <property type="expression patterns" value="baseline and differential"/>
</dbReference>
<dbReference type="GO" id="GO:0005886">
    <property type="term" value="C:plasma membrane"/>
    <property type="evidence" value="ECO:0007669"/>
    <property type="project" value="UniProtKB-SubCell"/>
</dbReference>
<dbReference type="GO" id="GO:0004930">
    <property type="term" value="F:G protein-coupled receptor activity"/>
    <property type="evidence" value="ECO:0007669"/>
    <property type="project" value="UniProtKB-KW"/>
</dbReference>
<dbReference type="GO" id="GO:0004984">
    <property type="term" value="F:olfactory receptor activity"/>
    <property type="evidence" value="ECO:0000318"/>
    <property type="project" value="GO_Central"/>
</dbReference>
<dbReference type="CDD" id="cd15226">
    <property type="entry name" value="7tmA_OR4-like"/>
    <property type="match status" value="1"/>
</dbReference>
<dbReference type="FunFam" id="1.20.1070.10:FF:000012">
    <property type="entry name" value="Olfactory receptor"/>
    <property type="match status" value="1"/>
</dbReference>
<dbReference type="Gene3D" id="1.20.1070.10">
    <property type="entry name" value="Rhodopsin 7-helix transmembrane proteins"/>
    <property type="match status" value="1"/>
</dbReference>
<dbReference type="InterPro" id="IPR000276">
    <property type="entry name" value="GPCR_Rhodpsn"/>
</dbReference>
<dbReference type="InterPro" id="IPR017452">
    <property type="entry name" value="GPCR_Rhodpsn_7TM"/>
</dbReference>
<dbReference type="InterPro" id="IPR000725">
    <property type="entry name" value="Olfact_rcpt"/>
</dbReference>
<dbReference type="InterPro" id="IPR050427">
    <property type="entry name" value="Olfactory_Receptors"/>
</dbReference>
<dbReference type="PANTHER" id="PTHR48002">
    <property type="entry name" value="OLFACTORY RECEPTOR"/>
    <property type="match status" value="1"/>
</dbReference>
<dbReference type="Pfam" id="PF13853">
    <property type="entry name" value="7tm_4"/>
    <property type="match status" value="1"/>
</dbReference>
<dbReference type="PRINTS" id="PR00237">
    <property type="entry name" value="GPCRRHODOPSN"/>
</dbReference>
<dbReference type="PRINTS" id="PR00245">
    <property type="entry name" value="OLFACTORYR"/>
</dbReference>
<dbReference type="SUPFAM" id="SSF81321">
    <property type="entry name" value="Family A G protein-coupled receptor-like"/>
    <property type="match status" value="1"/>
</dbReference>
<dbReference type="PROSITE" id="PS00237">
    <property type="entry name" value="G_PROTEIN_RECEP_F1_1"/>
    <property type="match status" value="1"/>
</dbReference>
<dbReference type="PROSITE" id="PS50262">
    <property type="entry name" value="G_PROTEIN_RECEP_F1_2"/>
    <property type="match status" value="1"/>
</dbReference>
<proteinExistence type="evidence at transcript level"/>
<name>O4F15_HUMAN</name>
<gene>
    <name type="primary">OR4F15</name>
</gene>
<sequence>MNGMNHSVVSEFVFMGLTNSREIQLLLFVFSLLFYFASMMGNLVIVFTVTMDAHLHSPMYFLLANLSIIDMAFCSITAPKMICDIFKKHKAISFRGCITQIFFSHALGGTEMVLLIAMAFDRYMAICKPLHYLTIMSPRMCLYFLATSSIIGLIHSLVQLVFVVDLPFCGPNIFDSFYCDLPRLLRLACTNTQELEFMVTVNSGLISVGSFVLLVISYIFILFTVWKHSSGGLAKALSTLSAHVTVVILFFGPLMFFYTWPSPTSHLDKYLAIFDAFITPFLNPVIYTFRNKDMKVAMRRLCSRLAHFTKIL</sequence>
<comment type="function">
    <text evidence="3">Odorant receptor.</text>
</comment>
<comment type="subcellular location">
    <subcellularLocation>
        <location>Cell membrane</location>
        <topology>Multi-pass membrane protein</topology>
    </subcellularLocation>
</comment>
<comment type="similarity">
    <text evidence="2">Belongs to the G-protein coupled receptor 1 family.</text>
</comment>
<comment type="online information" name="Human Olfactory Receptor Data Exploratorium (HORDE)">
    <link uri="http://genome.weizmann.ac.il/horde/card/index/symbol:OR4F15"/>
</comment>
<organism>
    <name type="scientific">Homo sapiens</name>
    <name type="common">Human</name>
    <dbReference type="NCBI Taxonomy" id="9606"/>
    <lineage>
        <taxon>Eukaryota</taxon>
        <taxon>Metazoa</taxon>
        <taxon>Chordata</taxon>
        <taxon>Craniata</taxon>
        <taxon>Vertebrata</taxon>
        <taxon>Euteleostomi</taxon>
        <taxon>Mammalia</taxon>
        <taxon>Eutheria</taxon>
        <taxon>Euarchontoglires</taxon>
        <taxon>Primates</taxon>
        <taxon>Haplorrhini</taxon>
        <taxon>Catarrhini</taxon>
        <taxon>Hominidae</taxon>
        <taxon>Homo</taxon>
    </lineage>
</organism>
<reference key="1">
    <citation type="submission" date="2001-07" db="EMBL/GenBank/DDBJ databases">
        <title>Genome-wide discovery and analysis of human seven transmembrane helix receptor genes.</title>
        <authorList>
            <person name="Suwa M."/>
            <person name="Sato T."/>
            <person name="Okouchi I."/>
            <person name="Arita M."/>
            <person name="Futami K."/>
            <person name="Matsumoto S."/>
            <person name="Tsutsumi S."/>
            <person name="Aburatani H."/>
            <person name="Asai K."/>
            <person name="Akiyama Y."/>
        </authorList>
    </citation>
    <scope>NUCLEOTIDE SEQUENCE [GENOMIC DNA]</scope>
</reference>
<reference key="2">
    <citation type="submission" date="2005-07" db="EMBL/GenBank/DDBJ databases">
        <authorList>
            <person name="Mural R.J."/>
            <person name="Istrail S."/>
            <person name="Sutton G.G."/>
            <person name="Florea L."/>
            <person name="Halpern A.L."/>
            <person name="Mobarry C.M."/>
            <person name="Lippert R."/>
            <person name="Walenz B."/>
            <person name="Shatkay H."/>
            <person name="Dew I."/>
            <person name="Miller J.R."/>
            <person name="Flanigan M.J."/>
            <person name="Edwards N.J."/>
            <person name="Bolanos R."/>
            <person name="Fasulo D."/>
            <person name="Halldorsson B.V."/>
            <person name="Hannenhalli S."/>
            <person name="Turner R."/>
            <person name="Yooseph S."/>
            <person name="Lu F."/>
            <person name="Nusskern D.R."/>
            <person name="Shue B.C."/>
            <person name="Zheng X.H."/>
            <person name="Zhong F."/>
            <person name="Delcher A.L."/>
            <person name="Huson D.H."/>
            <person name="Kravitz S.A."/>
            <person name="Mouchard L."/>
            <person name="Reinert K."/>
            <person name="Remington K.A."/>
            <person name="Clark A.G."/>
            <person name="Waterman M.S."/>
            <person name="Eichler E.E."/>
            <person name="Adams M.D."/>
            <person name="Hunkapiller M.W."/>
            <person name="Myers E.W."/>
            <person name="Venter J.C."/>
        </authorList>
    </citation>
    <scope>NUCLEOTIDE SEQUENCE [LARGE SCALE GENOMIC DNA]</scope>
</reference>
<reference key="3">
    <citation type="journal article" date="2004" name="Genome Res.">
        <title>The status, quality, and expansion of the NIH full-length cDNA project: the Mammalian Gene Collection (MGC).</title>
        <authorList>
            <consortium name="The MGC Project Team"/>
        </authorList>
    </citation>
    <scope>NUCLEOTIDE SEQUENCE [LARGE SCALE MRNA]</scope>
</reference>
<reference key="4">
    <citation type="journal article" date="2002" name="Genomics">
        <title>DEFOG: a practical scheme for deciphering families of genes.</title>
        <authorList>
            <person name="Fuchs T."/>
            <person name="Malecova B."/>
            <person name="Linhart C."/>
            <person name="Sharan R."/>
            <person name="Khen M."/>
            <person name="Herwig R."/>
            <person name="Shmulevich D."/>
            <person name="Elkon R."/>
            <person name="Steinfath M."/>
            <person name="O'Brien J.K."/>
            <person name="Radelof U."/>
            <person name="Lehrach H."/>
            <person name="Lancet D."/>
            <person name="Shamir R."/>
        </authorList>
    </citation>
    <scope>NUCLEOTIDE SEQUENCE [GENOMIC DNA] OF 68-280</scope>
</reference>
<reference key="5">
    <citation type="journal article" date="2004" name="Proc. Natl. Acad. Sci. U.S.A.">
        <title>The human olfactory receptor gene family.</title>
        <authorList>
            <person name="Malnic B."/>
            <person name="Godfrey P.A."/>
            <person name="Buck L.B."/>
        </authorList>
    </citation>
    <scope>IDENTIFICATION</scope>
</reference>
<reference key="6">
    <citation type="journal article" date="2004" name="Proc. Natl. Acad. Sci. U.S.A.">
        <authorList>
            <person name="Malnic B."/>
            <person name="Godfrey P.A."/>
            <person name="Buck L.B."/>
        </authorList>
    </citation>
    <scope>ERRATUM OF PUBMED:14983052</scope>
</reference>
<accession>Q8NGB8</accession>
<accession>B2RNQ5</accession>
<accession>Q6IF57</accession>
<accession>Q96R70</accession>
<evidence type="ECO:0000255" key="1"/>
<evidence type="ECO:0000255" key="2">
    <source>
        <dbReference type="PROSITE-ProRule" id="PRU00521"/>
    </source>
</evidence>
<evidence type="ECO:0000305" key="3"/>
<protein>
    <recommendedName>
        <fullName>Olfactory receptor 4F15</fullName>
    </recommendedName>
    <alternativeName>
        <fullName>Olfactory receptor OR15-14</fullName>
    </alternativeName>
</protein>
<keyword id="KW-1003">Cell membrane</keyword>
<keyword id="KW-1015">Disulfide bond</keyword>
<keyword id="KW-0297">G-protein coupled receptor</keyword>
<keyword id="KW-0325">Glycoprotein</keyword>
<keyword id="KW-0472">Membrane</keyword>
<keyword id="KW-0552">Olfaction</keyword>
<keyword id="KW-0675">Receptor</keyword>
<keyword id="KW-1185">Reference proteome</keyword>
<keyword id="KW-0716">Sensory transduction</keyword>
<keyword id="KW-0807">Transducer</keyword>
<keyword id="KW-0812">Transmembrane</keyword>
<keyword id="KW-1133">Transmembrane helix</keyword>
<feature type="chain" id="PRO_0000150549" description="Olfactory receptor 4F15">
    <location>
        <begin position="1"/>
        <end position="312"/>
    </location>
</feature>
<feature type="topological domain" description="Extracellular" evidence="1">
    <location>
        <begin position="1"/>
        <end position="25"/>
    </location>
</feature>
<feature type="transmembrane region" description="Helical; Name=1" evidence="1">
    <location>
        <begin position="26"/>
        <end position="49"/>
    </location>
</feature>
<feature type="topological domain" description="Cytoplasmic" evidence="1">
    <location>
        <begin position="50"/>
        <end position="57"/>
    </location>
</feature>
<feature type="transmembrane region" description="Helical; Name=2" evidence="1">
    <location>
        <begin position="58"/>
        <end position="79"/>
    </location>
</feature>
<feature type="topological domain" description="Extracellular" evidence="1">
    <location>
        <begin position="80"/>
        <end position="100"/>
    </location>
</feature>
<feature type="transmembrane region" description="Helical; Name=3" evidence="1">
    <location>
        <begin position="101"/>
        <end position="120"/>
    </location>
</feature>
<feature type="topological domain" description="Cytoplasmic" evidence="1">
    <location>
        <begin position="121"/>
        <end position="139"/>
    </location>
</feature>
<feature type="transmembrane region" description="Helical; Name=4" evidence="1">
    <location>
        <begin position="140"/>
        <end position="158"/>
    </location>
</feature>
<feature type="topological domain" description="Extracellular" evidence="1">
    <location>
        <begin position="159"/>
        <end position="195"/>
    </location>
</feature>
<feature type="transmembrane region" description="Helical; Name=5" evidence="1">
    <location>
        <begin position="196"/>
        <end position="219"/>
    </location>
</feature>
<feature type="topological domain" description="Cytoplasmic" evidence="1">
    <location>
        <begin position="220"/>
        <end position="235"/>
    </location>
</feature>
<feature type="transmembrane region" description="Helical; Name=6" evidence="1">
    <location>
        <begin position="236"/>
        <end position="258"/>
    </location>
</feature>
<feature type="topological domain" description="Extracellular" evidence="1">
    <location>
        <begin position="259"/>
        <end position="269"/>
    </location>
</feature>
<feature type="transmembrane region" description="Helical; Name=7" evidence="1">
    <location>
        <begin position="270"/>
        <end position="289"/>
    </location>
</feature>
<feature type="topological domain" description="Cytoplasmic" evidence="1">
    <location>
        <begin position="290"/>
        <end position="312"/>
    </location>
</feature>
<feature type="glycosylation site" description="N-linked (GlcNAc...) asparagine" evidence="1">
    <location>
        <position position="5"/>
    </location>
</feature>
<feature type="disulfide bond" evidence="2">
    <location>
        <begin position="97"/>
        <end position="189"/>
    </location>
</feature>